<evidence type="ECO:0000255" key="1">
    <source>
        <dbReference type="HAMAP-Rule" id="MF_01347"/>
    </source>
</evidence>
<evidence type="ECO:0000256" key="2">
    <source>
        <dbReference type="SAM" id="MobiDB-lite"/>
    </source>
</evidence>
<sequence>MAKAATPKETAAVKKPAAPKKAATAKTTAVVATGAVGRVTQVIGAVVDVAFEEGQLPQILNALETDNKGNRLVLEVAQHLGENAVRTIAMDSTEGLVRGQSVTDTGGPISVPVGKETLGRIMNVIGEPVDEAGPVETSSRRAIHQDAPAYVEQSTEAQILVTGIKVVDLLAPYAKGGKIGLFGGAGVGKTVLIMELINNVAKAHGGYSVFAGVGERTREGNDLYHEMIESGVNKHGGGEGSKAALVYGQMNEPPGARARVALTGLTIAEHFRDEGQDVLFFVDNIFRFTQAGSEVSALLGRIPSAVGYQPTLATDMGQMQERITTTTKGSITSVQAIYVPADDLTDPAPATSFAHLDATTVLSRSIAEKGIYPAVDPLDSTSRMLDPMIVGEEHYEVSRKVQSTLQRYKALQDIIAILGMDELSEEDKVAVARARKIERFLSQPFFVAEVFTGSPGKLVALEDTIKGFKGLVNGEYDHLPEAAFYMVGSIDEAIEKAKKLAAEAA</sequence>
<proteinExistence type="inferred from homology"/>
<gene>
    <name evidence="1" type="primary">atpD</name>
    <name type="ordered locus">NGR_c31110</name>
</gene>
<reference key="1">
    <citation type="journal article" date="2009" name="Appl. Environ. Microbiol.">
        <title>Rhizobium sp. strain NGR234 possesses a remarkable number of secretion systems.</title>
        <authorList>
            <person name="Schmeisser C."/>
            <person name="Liesegang H."/>
            <person name="Krysciak D."/>
            <person name="Bakkou N."/>
            <person name="Le Quere A."/>
            <person name="Wollherr A."/>
            <person name="Heinemeyer I."/>
            <person name="Morgenstern B."/>
            <person name="Pommerening-Roeser A."/>
            <person name="Flores M."/>
            <person name="Palacios R."/>
            <person name="Brenner S."/>
            <person name="Gottschalk G."/>
            <person name="Schmitz R.A."/>
            <person name="Broughton W.J."/>
            <person name="Perret X."/>
            <person name="Strittmatter A.W."/>
            <person name="Streit W.R."/>
        </authorList>
    </citation>
    <scope>NUCLEOTIDE SEQUENCE [LARGE SCALE GENOMIC DNA]</scope>
    <source>
        <strain>NBRC 101917 / NGR234</strain>
    </source>
</reference>
<organism>
    <name type="scientific">Sinorhizobium fredii (strain NBRC 101917 / NGR234)</name>
    <dbReference type="NCBI Taxonomy" id="394"/>
    <lineage>
        <taxon>Bacteria</taxon>
        <taxon>Pseudomonadati</taxon>
        <taxon>Pseudomonadota</taxon>
        <taxon>Alphaproteobacteria</taxon>
        <taxon>Hyphomicrobiales</taxon>
        <taxon>Rhizobiaceae</taxon>
        <taxon>Sinorhizobium/Ensifer group</taxon>
        <taxon>Sinorhizobium</taxon>
    </lineage>
</organism>
<keyword id="KW-0066">ATP synthesis</keyword>
<keyword id="KW-0067">ATP-binding</keyword>
<keyword id="KW-0997">Cell inner membrane</keyword>
<keyword id="KW-1003">Cell membrane</keyword>
<keyword id="KW-0139">CF(1)</keyword>
<keyword id="KW-0375">Hydrogen ion transport</keyword>
<keyword id="KW-0406">Ion transport</keyword>
<keyword id="KW-0472">Membrane</keyword>
<keyword id="KW-0547">Nucleotide-binding</keyword>
<keyword id="KW-1185">Reference proteome</keyword>
<keyword id="KW-1278">Translocase</keyword>
<keyword id="KW-0813">Transport</keyword>
<protein>
    <recommendedName>
        <fullName evidence="1">ATP synthase subunit beta</fullName>
        <ecNumber evidence="1">7.1.2.2</ecNumber>
    </recommendedName>
    <alternativeName>
        <fullName evidence="1">ATP synthase F1 sector subunit beta</fullName>
    </alternativeName>
    <alternativeName>
        <fullName evidence="1">F-ATPase subunit beta</fullName>
    </alternativeName>
</protein>
<accession>C3M9S1</accession>
<name>ATPB_SINFN</name>
<dbReference type="EC" id="7.1.2.2" evidence="1"/>
<dbReference type="EMBL" id="CP001389">
    <property type="protein sequence ID" value="ACP26846.1"/>
    <property type="molecule type" value="Genomic_DNA"/>
</dbReference>
<dbReference type="RefSeq" id="WP_012709598.1">
    <property type="nucleotide sequence ID" value="NC_012587.1"/>
</dbReference>
<dbReference type="RefSeq" id="YP_002827599.1">
    <property type="nucleotide sequence ID" value="NC_012587.1"/>
</dbReference>
<dbReference type="SMR" id="C3M9S1"/>
<dbReference type="STRING" id="394.NGR_c31110"/>
<dbReference type="KEGG" id="rhi:NGR_c31110"/>
<dbReference type="PATRIC" id="fig|394.7.peg.5949"/>
<dbReference type="eggNOG" id="COG0055">
    <property type="taxonomic scope" value="Bacteria"/>
</dbReference>
<dbReference type="HOGENOM" id="CLU_022398_0_2_5"/>
<dbReference type="OrthoDB" id="9801639at2"/>
<dbReference type="Proteomes" id="UP000001054">
    <property type="component" value="Chromosome"/>
</dbReference>
<dbReference type="GO" id="GO:0005886">
    <property type="term" value="C:plasma membrane"/>
    <property type="evidence" value="ECO:0007669"/>
    <property type="project" value="UniProtKB-SubCell"/>
</dbReference>
<dbReference type="GO" id="GO:0045259">
    <property type="term" value="C:proton-transporting ATP synthase complex"/>
    <property type="evidence" value="ECO:0007669"/>
    <property type="project" value="UniProtKB-KW"/>
</dbReference>
<dbReference type="GO" id="GO:0005524">
    <property type="term" value="F:ATP binding"/>
    <property type="evidence" value="ECO:0007669"/>
    <property type="project" value="UniProtKB-UniRule"/>
</dbReference>
<dbReference type="GO" id="GO:0016887">
    <property type="term" value="F:ATP hydrolysis activity"/>
    <property type="evidence" value="ECO:0007669"/>
    <property type="project" value="InterPro"/>
</dbReference>
<dbReference type="GO" id="GO:0046933">
    <property type="term" value="F:proton-transporting ATP synthase activity, rotational mechanism"/>
    <property type="evidence" value="ECO:0007669"/>
    <property type="project" value="UniProtKB-UniRule"/>
</dbReference>
<dbReference type="CDD" id="cd18110">
    <property type="entry name" value="ATP-synt_F1_beta_C"/>
    <property type="match status" value="1"/>
</dbReference>
<dbReference type="CDD" id="cd18115">
    <property type="entry name" value="ATP-synt_F1_beta_N"/>
    <property type="match status" value="1"/>
</dbReference>
<dbReference type="CDD" id="cd01133">
    <property type="entry name" value="F1-ATPase_beta_CD"/>
    <property type="match status" value="1"/>
</dbReference>
<dbReference type="FunFam" id="1.10.1140.10:FF:000001">
    <property type="entry name" value="ATP synthase subunit beta"/>
    <property type="match status" value="1"/>
</dbReference>
<dbReference type="FunFam" id="2.40.10.170:FF:000005">
    <property type="entry name" value="ATP synthase subunit beta"/>
    <property type="match status" value="1"/>
</dbReference>
<dbReference type="FunFam" id="3.40.50.300:FF:000026">
    <property type="entry name" value="ATP synthase subunit beta"/>
    <property type="match status" value="1"/>
</dbReference>
<dbReference type="Gene3D" id="2.40.10.170">
    <property type="match status" value="1"/>
</dbReference>
<dbReference type="Gene3D" id="1.10.1140.10">
    <property type="entry name" value="Bovine Mitochondrial F1-atpase, Atp Synthase Beta Chain, Chain D, domain 3"/>
    <property type="match status" value="1"/>
</dbReference>
<dbReference type="Gene3D" id="3.40.50.300">
    <property type="entry name" value="P-loop containing nucleotide triphosphate hydrolases"/>
    <property type="match status" value="1"/>
</dbReference>
<dbReference type="HAMAP" id="MF_01347">
    <property type="entry name" value="ATP_synth_beta_bact"/>
    <property type="match status" value="1"/>
</dbReference>
<dbReference type="InterPro" id="IPR003593">
    <property type="entry name" value="AAA+_ATPase"/>
</dbReference>
<dbReference type="InterPro" id="IPR055190">
    <property type="entry name" value="ATP-synt_VA_C"/>
</dbReference>
<dbReference type="InterPro" id="IPR005722">
    <property type="entry name" value="ATP_synth_F1_bsu"/>
</dbReference>
<dbReference type="InterPro" id="IPR020003">
    <property type="entry name" value="ATPase_a/bsu_AS"/>
</dbReference>
<dbReference type="InterPro" id="IPR050053">
    <property type="entry name" value="ATPase_alpha/beta_chains"/>
</dbReference>
<dbReference type="InterPro" id="IPR004100">
    <property type="entry name" value="ATPase_F1/V1/A1_a/bsu_N"/>
</dbReference>
<dbReference type="InterPro" id="IPR036121">
    <property type="entry name" value="ATPase_F1/V1/A1_a/bsu_N_sf"/>
</dbReference>
<dbReference type="InterPro" id="IPR000194">
    <property type="entry name" value="ATPase_F1/V1/A1_a/bsu_nucl-bd"/>
</dbReference>
<dbReference type="InterPro" id="IPR024034">
    <property type="entry name" value="ATPase_F1/V1_b/a_C"/>
</dbReference>
<dbReference type="InterPro" id="IPR027417">
    <property type="entry name" value="P-loop_NTPase"/>
</dbReference>
<dbReference type="NCBIfam" id="TIGR01039">
    <property type="entry name" value="atpD"/>
    <property type="match status" value="1"/>
</dbReference>
<dbReference type="PANTHER" id="PTHR15184">
    <property type="entry name" value="ATP SYNTHASE"/>
    <property type="match status" value="1"/>
</dbReference>
<dbReference type="PANTHER" id="PTHR15184:SF71">
    <property type="entry name" value="ATP SYNTHASE SUBUNIT BETA, MITOCHONDRIAL"/>
    <property type="match status" value="1"/>
</dbReference>
<dbReference type="Pfam" id="PF00006">
    <property type="entry name" value="ATP-synt_ab"/>
    <property type="match status" value="1"/>
</dbReference>
<dbReference type="Pfam" id="PF02874">
    <property type="entry name" value="ATP-synt_ab_N"/>
    <property type="match status" value="1"/>
</dbReference>
<dbReference type="Pfam" id="PF22919">
    <property type="entry name" value="ATP-synt_VA_C"/>
    <property type="match status" value="1"/>
</dbReference>
<dbReference type="PIRSF" id="PIRSF039072">
    <property type="entry name" value="ATPase_subunit_beta"/>
    <property type="match status" value="1"/>
</dbReference>
<dbReference type="SMART" id="SM00382">
    <property type="entry name" value="AAA"/>
    <property type="match status" value="1"/>
</dbReference>
<dbReference type="SUPFAM" id="SSF47917">
    <property type="entry name" value="C-terminal domain of alpha and beta subunits of F1 ATP synthase"/>
    <property type="match status" value="1"/>
</dbReference>
<dbReference type="SUPFAM" id="SSF50615">
    <property type="entry name" value="N-terminal domain of alpha and beta subunits of F1 ATP synthase"/>
    <property type="match status" value="1"/>
</dbReference>
<dbReference type="SUPFAM" id="SSF52540">
    <property type="entry name" value="P-loop containing nucleoside triphosphate hydrolases"/>
    <property type="match status" value="1"/>
</dbReference>
<dbReference type="PROSITE" id="PS00152">
    <property type="entry name" value="ATPASE_ALPHA_BETA"/>
    <property type="match status" value="1"/>
</dbReference>
<feature type="chain" id="PRO_1000166600" description="ATP synthase subunit beta">
    <location>
        <begin position="1"/>
        <end position="505"/>
    </location>
</feature>
<feature type="region of interest" description="Disordered" evidence="2">
    <location>
        <begin position="1"/>
        <end position="25"/>
    </location>
</feature>
<feature type="binding site" evidence="1">
    <location>
        <begin position="183"/>
        <end position="190"/>
    </location>
    <ligand>
        <name>ATP</name>
        <dbReference type="ChEBI" id="CHEBI:30616"/>
    </ligand>
</feature>
<comment type="function">
    <text evidence="1">Produces ATP from ADP in the presence of a proton gradient across the membrane. The catalytic sites are hosted primarily by the beta subunits.</text>
</comment>
<comment type="catalytic activity">
    <reaction evidence="1">
        <text>ATP + H2O + 4 H(+)(in) = ADP + phosphate + 5 H(+)(out)</text>
        <dbReference type="Rhea" id="RHEA:57720"/>
        <dbReference type="ChEBI" id="CHEBI:15377"/>
        <dbReference type="ChEBI" id="CHEBI:15378"/>
        <dbReference type="ChEBI" id="CHEBI:30616"/>
        <dbReference type="ChEBI" id="CHEBI:43474"/>
        <dbReference type="ChEBI" id="CHEBI:456216"/>
        <dbReference type="EC" id="7.1.2.2"/>
    </reaction>
</comment>
<comment type="subunit">
    <text evidence="1">F-type ATPases have 2 components, CF(1) - the catalytic core - and CF(0) - the membrane proton channel. CF(1) has five subunits: alpha(3), beta(3), gamma(1), delta(1), epsilon(1). CF(0) has three main subunits: a(1), b(2) and c(9-12). The alpha and beta chains form an alternating ring which encloses part of the gamma chain. CF(1) is attached to CF(0) by a central stalk formed by the gamma and epsilon chains, while a peripheral stalk is formed by the delta and b chains.</text>
</comment>
<comment type="subcellular location">
    <subcellularLocation>
        <location evidence="1">Cell inner membrane</location>
        <topology evidence="1">Peripheral membrane protein</topology>
    </subcellularLocation>
</comment>
<comment type="similarity">
    <text evidence="1">Belongs to the ATPase alpha/beta chains family.</text>
</comment>